<name>MEPA_STAAN</name>
<organism>
    <name type="scientific">Staphylococcus aureus (strain N315)</name>
    <dbReference type="NCBI Taxonomy" id="158879"/>
    <lineage>
        <taxon>Bacteria</taxon>
        <taxon>Bacillati</taxon>
        <taxon>Bacillota</taxon>
        <taxon>Bacilli</taxon>
        <taxon>Bacillales</taxon>
        <taxon>Staphylococcaceae</taxon>
        <taxon>Staphylococcus</taxon>
    </lineage>
</organism>
<protein>
    <recommendedName>
        <fullName>Multidrug export protein MepA</fullName>
    </recommendedName>
</protein>
<sequence>MKDEQLYYFEKSPVFKAMMHFSLPMMIGTLLSVIYGILNIYFIGFLEDSHMISAISLTLPVFAILMGLGNLFGVGAGTYISRLLGAKDYSKSKFVSSFSIYGGIALGLIVILVTLPFSDQIAAILGARGETLALTSNYLKVMFLSAPFVILFFILEQFARAIGAPMISMIGMLASVGLNIILDPILIFGFDLNVVGAALGTAISNVAAALFFIIYFMKNSDVVSVNIKLAKPNKEMLSEIFKIGIPAFLMSILMGFTGLVLNLFLAHYGNFAIASYGISFRLVQFPELIIMGLCEGVVPLIAYNFMANKGRMKDVIKAVIMSIGVIFVVCMIAVFTIGHHMVGLFTTDQAIVEMATFILKVTMASLLLNGIGFLFTGMLQATGQGRGATIMAILQGAIIIPVLFIMNALFGLTGVIWSLLIAESLCALAAMLIVYLLRDRLTVDTSELIEG</sequence>
<feature type="chain" id="PRO_0000290233" description="Multidrug export protein MepA">
    <location>
        <begin position="1"/>
        <end position="451"/>
    </location>
</feature>
<feature type="transmembrane region" description="Helical" evidence="2">
    <location>
        <begin position="26"/>
        <end position="46"/>
    </location>
</feature>
<feature type="transmembrane region" description="Helical" evidence="2">
    <location>
        <begin position="54"/>
        <end position="74"/>
    </location>
</feature>
<feature type="transmembrane region" description="Helical" evidence="2">
    <location>
        <begin position="97"/>
        <end position="117"/>
    </location>
</feature>
<feature type="transmembrane region" description="Helical" evidence="2">
    <location>
        <begin position="139"/>
        <end position="159"/>
    </location>
</feature>
<feature type="transmembrane region" description="Helical" evidence="2">
    <location>
        <begin position="170"/>
        <end position="190"/>
    </location>
</feature>
<feature type="transmembrane region" description="Helical" evidence="2">
    <location>
        <begin position="194"/>
        <end position="214"/>
    </location>
</feature>
<feature type="transmembrane region" description="Helical" evidence="2">
    <location>
        <begin position="245"/>
        <end position="265"/>
    </location>
</feature>
<feature type="transmembrane region" description="Helical" evidence="2">
    <location>
        <begin position="282"/>
        <end position="302"/>
    </location>
</feature>
<feature type="transmembrane region" description="Helical" evidence="2">
    <location>
        <begin position="318"/>
        <end position="338"/>
    </location>
</feature>
<feature type="transmembrane region" description="Helical" evidence="2">
    <location>
        <begin position="355"/>
        <end position="375"/>
    </location>
</feature>
<feature type="transmembrane region" description="Helical" evidence="2">
    <location>
        <begin position="397"/>
        <end position="417"/>
    </location>
</feature>
<feature type="transmembrane region" description="Helical" evidence="2">
    <location>
        <begin position="418"/>
        <end position="438"/>
    </location>
</feature>
<reference key="1">
    <citation type="journal article" date="2001" name="Lancet">
        <title>Whole genome sequencing of meticillin-resistant Staphylococcus aureus.</title>
        <authorList>
            <person name="Kuroda M."/>
            <person name="Ohta T."/>
            <person name="Uchiyama I."/>
            <person name="Baba T."/>
            <person name="Yuzawa H."/>
            <person name="Kobayashi I."/>
            <person name="Cui L."/>
            <person name="Oguchi A."/>
            <person name="Aoki K."/>
            <person name="Nagai Y."/>
            <person name="Lian J.-Q."/>
            <person name="Ito T."/>
            <person name="Kanamori M."/>
            <person name="Matsumaru H."/>
            <person name="Maruyama A."/>
            <person name="Murakami H."/>
            <person name="Hosoyama A."/>
            <person name="Mizutani-Ui Y."/>
            <person name="Takahashi N.K."/>
            <person name="Sawano T."/>
            <person name="Inoue R."/>
            <person name="Kaito C."/>
            <person name="Sekimizu K."/>
            <person name="Hirakawa H."/>
            <person name="Kuhara S."/>
            <person name="Goto S."/>
            <person name="Yabuzaki J."/>
            <person name="Kanehisa M."/>
            <person name="Yamashita A."/>
            <person name="Oshima K."/>
            <person name="Furuya K."/>
            <person name="Yoshino C."/>
            <person name="Shiba T."/>
            <person name="Hattori M."/>
            <person name="Ogasawara N."/>
            <person name="Hayashi H."/>
            <person name="Hiramatsu K."/>
        </authorList>
    </citation>
    <scope>NUCLEOTIDE SEQUENCE [LARGE SCALE GENOMIC DNA]</scope>
    <source>
        <strain>N315</strain>
    </source>
</reference>
<reference key="2">
    <citation type="journal article" date="2005" name="Antimicrob. Agents Chemother.">
        <title>A novel MATE family efflux pump contributes to the reduced susceptibility of laboratory-derived Staphylococcus aureus mutants to tigecycline.</title>
        <authorList>
            <person name="McAleese F."/>
            <person name="Petersen P."/>
            <person name="Ruzin A."/>
            <person name="Dunman P.M."/>
            <person name="Murphy E."/>
            <person name="Projan S.J."/>
            <person name="Bradford P.A."/>
        </authorList>
    </citation>
    <scope>FUNCTION IN TIGECYCLINE RESISTANCE</scope>
    <scope>INDUCTION</scope>
</reference>
<dbReference type="EMBL" id="BA000018">
    <property type="protein sequence ID" value="BAB41547.1"/>
    <property type="molecule type" value="Genomic_DNA"/>
</dbReference>
<dbReference type="PIR" id="H89798">
    <property type="entry name" value="H89798"/>
</dbReference>
<dbReference type="RefSeq" id="WP_000651051.1">
    <property type="nucleotide sequence ID" value="NC_002745.2"/>
</dbReference>
<dbReference type="SMR" id="Q7A7N0"/>
<dbReference type="EnsemblBacteria" id="BAB41547">
    <property type="protein sequence ID" value="BAB41547"/>
    <property type="gene ID" value="BAB41547"/>
</dbReference>
<dbReference type="KEGG" id="sau:SA0323"/>
<dbReference type="HOGENOM" id="CLU_012893_0_1_9"/>
<dbReference type="GO" id="GO:0005886">
    <property type="term" value="C:plasma membrane"/>
    <property type="evidence" value="ECO:0007669"/>
    <property type="project" value="UniProtKB-SubCell"/>
</dbReference>
<dbReference type="GO" id="GO:0015297">
    <property type="term" value="F:antiporter activity"/>
    <property type="evidence" value="ECO:0007669"/>
    <property type="project" value="InterPro"/>
</dbReference>
<dbReference type="GO" id="GO:0042910">
    <property type="term" value="F:xenobiotic transmembrane transporter activity"/>
    <property type="evidence" value="ECO:0007669"/>
    <property type="project" value="InterPro"/>
</dbReference>
<dbReference type="GO" id="GO:0046677">
    <property type="term" value="P:response to antibiotic"/>
    <property type="evidence" value="ECO:0007669"/>
    <property type="project" value="UniProtKB-KW"/>
</dbReference>
<dbReference type="CDD" id="cd13143">
    <property type="entry name" value="MATE_MepA_like"/>
    <property type="match status" value="1"/>
</dbReference>
<dbReference type="InterPro" id="IPR002528">
    <property type="entry name" value="MATE_fam"/>
</dbReference>
<dbReference type="InterPro" id="IPR045070">
    <property type="entry name" value="MATE_MepA-like"/>
</dbReference>
<dbReference type="InterPro" id="IPR051327">
    <property type="entry name" value="MATE_MepA_subfamily"/>
</dbReference>
<dbReference type="InterPro" id="IPR048279">
    <property type="entry name" value="MdtK-like"/>
</dbReference>
<dbReference type="NCBIfam" id="TIGR00797">
    <property type="entry name" value="matE"/>
    <property type="match status" value="1"/>
</dbReference>
<dbReference type="NCBIfam" id="NF000131">
    <property type="entry name" value="MATE_multi_MepA"/>
    <property type="match status" value="1"/>
</dbReference>
<dbReference type="PANTHER" id="PTHR43823:SF3">
    <property type="entry name" value="MULTIDRUG EXPORT PROTEIN MEPA"/>
    <property type="match status" value="1"/>
</dbReference>
<dbReference type="PANTHER" id="PTHR43823">
    <property type="entry name" value="SPORULATION PROTEIN YKVU"/>
    <property type="match status" value="1"/>
</dbReference>
<dbReference type="Pfam" id="PF01554">
    <property type="entry name" value="MatE"/>
    <property type="match status" value="2"/>
</dbReference>
<dbReference type="PIRSF" id="PIRSF006603">
    <property type="entry name" value="DinF"/>
    <property type="match status" value="1"/>
</dbReference>
<accession>Q7A7N0</accession>
<comment type="function">
    <text evidence="1 3">Multidrug resistance efflux protein (By similarity). Contributes to resistance to the glycylcycline antibiotic tigecycline.</text>
</comment>
<comment type="subcellular location">
    <subcellularLocation>
        <location evidence="4">Cell membrane</location>
        <topology evidence="4">Multi-pass membrane protein</topology>
    </subcellularLocation>
</comment>
<comment type="induction">
    <text evidence="3">Repressed by MepR.</text>
</comment>
<comment type="similarity">
    <text evidence="4">Belongs to the multi antimicrobial extrusion (MATE) (TC 2.A.66.1) family. MepA subfamily.</text>
</comment>
<gene>
    <name type="primary">mepA</name>
    <name type="ordered locus">SA0323</name>
</gene>
<keyword id="KW-0046">Antibiotic resistance</keyword>
<keyword id="KW-1003">Cell membrane</keyword>
<keyword id="KW-0472">Membrane</keyword>
<keyword id="KW-0812">Transmembrane</keyword>
<keyword id="KW-1133">Transmembrane helix</keyword>
<keyword id="KW-0813">Transport</keyword>
<proteinExistence type="evidence at protein level"/>
<evidence type="ECO:0000250" key="1"/>
<evidence type="ECO:0000255" key="2"/>
<evidence type="ECO:0000269" key="3">
    <source>
    </source>
</evidence>
<evidence type="ECO:0000305" key="4"/>